<name>RIMP_HAEIE</name>
<proteinExistence type="inferred from homology"/>
<keyword id="KW-0963">Cytoplasm</keyword>
<keyword id="KW-0690">Ribosome biogenesis</keyword>
<protein>
    <recommendedName>
        <fullName evidence="1">Ribosome maturation factor RimP</fullName>
    </recommendedName>
</protein>
<sequence length="151" mass="17299">MATLEQNLQEMLQDAVEDLGCELWGIECQRMGRFMTVRLFIDKDGGVTVDDCADVSRQVSAILDVEDPIADKYNLEVSSPGLDRPLFTLPQFERYIGQDIAVHLRIPVMERRKWQGKLERIEKDMITLIVDDQEQILVFGNIQKANVVAKF</sequence>
<evidence type="ECO:0000255" key="1">
    <source>
        <dbReference type="HAMAP-Rule" id="MF_01077"/>
    </source>
</evidence>
<accession>A5UBT4</accession>
<comment type="function">
    <text evidence="1">Required for maturation of 30S ribosomal subunits.</text>
</comment>
<comment type="subcellular location">
    <subcellularLocation>
        <location evidence="1">Cytoplasm</location>
    </subcellularLocation>
</comment>
<comment type="similarity">
    <text evidence="1">Belongs to the RimP family.</text>
</comment>
<feature type="chain" id="PRO_1000064715" description="Ribosome maturation factor RimP">
    <location>
        <begin position="1"/>
        <end position="151"/>
    </location>
</feature>
<organism>
    <name type="scientific">Haemophilus influenzae (strain PittEE)</name>
    <dbReference type="NCBI Taxonomy" id="374930"/>
    <lineage>
        <taxon>Bacteria</taxon>
        <taxon>Pseudomonadati</taxon>
        <taxon>Pseudomonadota</taxon>
        <taxon>Gammaproteobacteria</taxon>
        <taxon>Pasteurellales</taxon>
        <taxon>Pasteurellaceae</taxon>
        <taxon>Haemophilus</taxon>
    </lineage>
</organism>
<dbReference type="EMBL" id="CP000671">
    <property type="protein sequence ID" value="ABQ98235.1"/>
    <property type="molecule type" value="Genomic_DNA"/>
</dbReference>
<dbReference type="SMR" id="A5UBT4"/>
<dbReference type="KEGG" id="hip:CGSHiEE_04150"/>
<dbReference type="HOGENOM" id="CLU_070525_1_1_6"/>
<dbReference type="GO" id="GO:0005829">
    <property type="term" value="C:cytosol"/>
    <property type="evidence" value="ECO:0007669"/>
    <property type="project" value="TreeGrafter"/>
</dbReference>
<dbReference type="GO" id="GO:0000028">
    <property type="term" value="P:ribosomal small subunit assembly"/>
    <property type="evidence" value="ECO:0007669"/>
    <property type="project" value="TreeGrafter"/>
</dbReference>
<dbReference type="GO" id="GO:0006412">
    <property type="term" value="P:translation"/>
    <property type="evidence" value="ECO:0007669"/>
    <property type="project" value="TreeGrafter"/>
</dbReference>
<dbReference type="CDD" id="cd01734">
    <property type="entry name" value="YlxS_C"/>
    <property type="match status" value="1"/>
</dbReference>
<dbReference type="FunFam" id="3.30.300.70:FF:000001">
    <property type="entry name" value="Ribosome maturation factor RimP"/>
    <property type="match status" value="1"/>
</dbReference>
<dbReference type="Gene3D" id="2.30.30.180">
    <property type="entry name" value="Ribosome maturation factor RimP, C-terminal domain"/>
    <property type="match status" value="1"/>
</dbReference>
<dbReference type="Gene3D" id="3.30.300.70">
    <property type="entry name" value="RimP-like superfamily, N-terminal"/>
    <property type="match status" value="1"/>
</dbReference>
<dbReference type="HAMAP" id="MF_01077">
    <property type="entry name" value="RimP"/>
    <property type="match status" value="1"/>
</dbReference>
<dbReference type="InterPro" id="IPR003728">
    <property type="entry name" value="Ribosome_maturation_RimP"/>
</dbReference>
<dbReference type="InterPro" id="IPR028998">
    <property type="entry name" value="RimP_C"/>
</dbReference>
<dbReference type="InterPro" id="IPR036847">
    <property type="entry name" value="RimP_C_sf"/>
</dbReference>
<dbReference type="InterPro" id="IPR028989">
    <property type="entry name" value="RimP_N"/>
</dbReference>
<dbReference type="InterPro" id="IPR035956">
    <property type="entry name" value="RimP_N_sf"/>
</dbReference>
<dbReference type="NCBIfam" id="NF000927">
    <property type="entry name" value="PRK00092.1-1"/>
    <property type="match status" value="1"/>
</dbReference>
<dbReference type="PANTHER" id="PTHR33867">
    <property type="entry name" value="RIBOSOME MATURATION FACTOR RIMP"/>
    <property type="match status" value="1"/>
</dbReference>
<dbReference type="PANTHER" id="PTHR33867:SF1">
    <property type="entry name" value="RIBOSOME MATURATION FACTOR RIMP"/>
    <property type="match status" value="1"/>
</dbReference>
<dbReference type="Pfam" id="PF17384">
    <property type="entry name" value="DUF150_C"/>
    <property type="match status" value="1"/>
</dbReference>
<dbReference type="Pfam" id="PF02576">
    <property type="entry name" value="RimP_N"/>
    <property type="match status" value="1"/>
</dbReference>
<dbReference type="SUPFAM" id="SSF74942">
    <property type="entry name" value="YhbC-like, C-terminal domain"/>
    <property type="match status" value="1"/>
</dbReference>
<dbReference type="SUPFAM" id="SSF75420">
    <property type="entry name" value="YhbC-like, N-terminal domain"/>
    <property type="match status" value="1"/>
</dbReference>
<gene>
    <name evidence="1" type="primary">rimP</name>
    <name type="ordered locus">CGSHiEE_04150</name>
</gene>
<reference key="1">
    <citation type="journal article" date="2007" name="Genome Biol.">
        <title>Characterization and modeling of the Haemophilus influenzae core and supragenomes based on the complete genomic sequences of Rd and 12 clinical nontypeable strains.</title>
        <authorList>
            <person name="Hogg J.S."/>
            <person name="Hu F.Z."/>
            <person name="Janto B."/>
            <person name="Boissy R."/>
            <person name="Hayes J."/>
            <person name="Keefe R."/>
            <person name="Post J.C."/>
            <person name="Ehrlich G.D."/>
        </authorList>
    </citation>
    <scope>NUCLEOTIDE SEQUENCE [LARGE SCALE GENOMIC DNA]</scope>
    <source>
        <strain>PittEE</strain>
    </source>
</reference>